<name>I1BH_CONRA</name>
<sequence length="46" mass="4821">GPSFCKANGKPCSYHADCCNCCLSGICAPSTNWILPGCSTSSFFKI</sequence>
<organism>
    <name type="scientific">Conus radiatus</name>
    <name type="common">Rayed cone</name>
    <dbReference type="NCBI Taxonomy" id="61198"/>
    <lineage>
        <taxon>Eukaryota</taxon>
        <taxon>Metazoa</taxon>
        <taxon>Spiralia</taxon>
        <taxon>Lophotrochozoa</taxon>
        <taxon>Mollusca</taxon>
        <taxon>Gastropoda</taxon>
        <taxon>Caenogastropoda</taxon>
        <taxon>Neogastropoda</taxon>
        <taxon>Conoidea</taxon>
        <taxon>Conidae</taxon>
        <taxon>Conus</taxon>
        <taxon>Phasmoconus</taxon>
    </lineage>
</organism>
<feature type="chain" id="PRO_0000086874" description="Iota-conotoxin-like R11.17">
    <location>
        <begin position="1"/>
        <end position="46"/>
    </location>
</feature>
<feature type="modified residue" description="4-hydroxyproline" evidence="1">
    <location>
        <position position="2"/>
    </location>
</feature>
<feature type="modified residue" description="4-hydroxyproline" evidence="1">
    <location>
        <position position="11"/>
    </location>
</feature>
<feature type="modified residue" description="4-hydroxyproline" evidence="1">
    <location>
        <position position="29"/>
    </location>
</feature>
<feature type="modified residue" description="D-phenylalanine" evidence="1">
    <location>
        <position position="44"/>
    </location>
</feature>
<feature type="disulfide bond" evidence="2">
    <location>
        <begin position="5"/>
        <end position="19"/>
    </location>
</feature>
<feature type="disulfide bond" evidence="2">
    <location>
        <begin position="12"/>
        <end position="22"/>
    </location>
</feature>
<feature type="disulfide bond" evidence="2">
    <location>
        <begin position="18"/>
        <end position="27"/>
    </location>
</feature>
<feature type="disulfide bond" evidence="2">
    <location>
        <begin position="21"/>
        <end position="38"/>
    </location>
</feature>
<reference key="1">
    <citation type="journal article" date="2003" name="J. Neurochem.">
        <title>Novel excitatory Conus peptides define a new conotoxin superfamily.</title>
        <authorList>
            <person name="Jimenez E.C."/>
            <person name="Shetty R.P."/>
            <person name="Lirazan M."/>
            <person name="Rivier J."/>
            <person name="Walker C."/>
            <person name="Abogadie F.C."/>
            <person name="Yoshikami D."/>
            <person name="Cruz L.J."/>
            <person name="Olivera B.M."/>
        </authorList>
    </citation>
    <scope>NUCLEOTIDE SEQUENCE [MRNA]</scope>
    <source>
        <tissue>Venom duct</tissue>
    </source>
</reference>
<dbReference type="EMBL" id="AY208960">
    <property type="protein sequence ID" value="AAP41542.1"/>
    <property type="molecule type" value="mRNA"/>
</dbReference>
<dbReference type="SMR" id="Q7Z093"/>
<dbReference type="ConoServer" id="841">
    <property type="toxin name" value="R11.17"/>
</dbReference>
<dbReference type="GO" id="GO:0005576">
    <property type="term" value="C:extracellular region"/>
    <property type="evidence" value="ECO:0007669"/>
    <property type="project" value="UniProtKB-SubCell"/>
</dbReference>
<dbReference type="GO" id="GO:0017080">
    <property type="term" value="F:sodium channel regulator activity"/>
    <property type="evidence" value="ECO:0007669"/>
    <property type="project" value="UniProtKB-KW"/>
</dbReference>
<dbReference type="GO" id="GO:0090729">
    <property type="term" value="F:toxin activity"/>
    <property type="evidence" value="ECO:0007669"/>
    <property type="project" value="UniProtKB-KW"/>
</dbReference>
<dbReference type="Gene3D" id="4.10.40.80">
    <property type="match status" value="1"/>
</dbReference>
<dbReference type="InterPro" id="IPR013141">
    <property type="entry name" value="Conotoxin-I_CS"/>
</dbReference>
<dbReference type="InterPro" id="IPR012624">
    <property type="entry name" value="Toxin_19"/>
</dbReference>
<dbReference type="Pfam" id="PF08088">
    <property type="entry name" value="Toxin_19"/>
    <property type="match status" value="1"/>
</dbReference>
<dbReference type="PROSITE" id="PS60019">
    <property type="entry name" value="I_CONOTOXIN"/>
    <property type="match status" value="1"/>
</dbReference>
<protein>
    <recommendedName>
        <fullName>Iota-conotoxin-like R11.17</fullName>
    </recommendedName>
</protein>
<accession>Q7Z093</accession>
<evidence type="ECO:0000250" key="1"/>
<evidence type="ECO:0000250" key="2">
    <source>
        <dbReference type="UniProtKB" id="Q7Z094"/>
    </source>
</evidence>
<evidence type="ECO:0000305" key="3"/>
<comment type="function">
    <text evidence="1">Iota-conotoxins bind to voltage-gated sodium channels (Nav) and act as agonists by shifting the voltage-dependence of activation to more hyperpolarized levels. Produces general excitatory symptoms (By similarity).</text>
</comment>
<comment type="subcellular location">
    <subcellularLocation>
        <location evidence="1">Secreted</location>
    </subcellularLocation>
</comment>
<comment type="tissue specificity">
    <text>Expressed by the venom duct.</text>
</comment>
<comment type="domain">
    <text>The cysteine framework is XI (C-C-CC-CC-C-C).</text>
</comment>
<comment type="similarity">
    <text evidence="3">Belongs to the conotoxin I1 superfamily.</text>
</comment>
<keyword id="KW-0208">D-amino acid</keyword>
<keyword id="KW-1015">Disulfide bond</keyword>
<keyword id="KW-0379">Hydroxylation</keyword>
<keyword id="KW-0872">Ion channel impairing toxin</keyword>
<keyword id="KW-0528">Neurotoxin</keyword>
<keyword id="KW-0964">Secreted</keyword>
<keyword id="KW-0800">Toxin</keyword>
<keyword id="KW-0738">Voltage-gated sodium channel impairing toxin</keyword>
<proteinExistence type="evidence at transcript level"/>